<organism>
    <name type="scientific">Salmonella typhimurium (strain LT2 / SGSC1412 / ATCC 700720)</name>
    <dbReference type="NCBI Taxonomy" id="99287"/>
    <lineage>
        <taxon>Bacteria</taxon>
        <taxon>Pseudomonadati</taxon>
        <taxon>Pseudomonadota</taxon>
        <taxon>Gammaproteobacteria</taxon>
        <taxon>Enterobacterales</taxon>
        <taxon>Enterobacteriaceae</taxon>
        <taxon>Salmonella</taxon>
    </lineage>
</organism>
<comment type="function">
    <text evidence="1">Catalyzes the pyruvoyl-dependent decarboxylation of aspartate to produce beta-alanine.</text>
</comment>
<comment type="catalytic activity">
    <reaction evidence="1">
        <text>L-aspartate + H(+) = beta-alanine + CO2</text>
        <dbReference type="Rhea" id="RHEA:19497"/>
        <dbReference type="ChEBI" id="CHEBI:15378"/>
        <dbReference type="ChEBI" id="CHEBI:16526"/>
        <dbReference type="ChEBI" id="CHEBI:29991"/>
        <dbReference type="ChEBI" id="CHEBI:57966"/>
        <dbReference type="EC" id="4.1.1.11"/>
    </reaction>
</comment>
<comment type="cofactor">
    <cofactor evidence="1">
        <name>pyruvate</name>
        <dbReference type="ChEBI" id="CHEBI:15361"/>
    </cofactor>
    <text evidence="1">Binds 1 pyruvoyl group covalently per subunit.</text>
</comment>
<comment type="activity regulation">
    <text evidence="2 3">Cleavage and activation of PanD is accelerated by PanM.</text>
</comment>
<comment type="pathway">
    <text evidence="1">Cofactor biosynthesis; (R)-pantothenate biosynthesis; beta-alanine from L-aspartate: step 1/1.</text>
</comment>
<comment type="subunit">
    <text evidence="1 2 3">Heterooctamer of four alpha and four beta subunits (By similarity). Interacts with PanM (PubMed:22497218, PubMed:22782525).</text>
</comment>
<comment type="subcellular location">
    <subcellularLocation>
        <location evidence="1">Cytoplasm</location>
    </subcellularLocation>
</comment>
<comment type="PTM">
    <text evidence="1">Is synthesized initially as an inactive proenzyme, which is activated by self-cleavage at a specific serine bond to produce a beta-subunit with a hydroxyl group at its C-terminus and an alpha-subunit with a pyruvoyl group at its N-terminus.</text>
</comment>
<comment type="similarity">
    <text evidence="1">Belongs to the PanD family.</text>
</comment>
<sequence>MIRTMLQGKLHRVKVTQADLHYEGSCAIDQDFLDASGILENEAIDIWNVTNGKRFSTYAIAAERGSRIISVNGAAAHCAEVGDIVIIASFVTMSDEEARTWRPKVAYFEGDNEMKRTAKAIPVQVA</sequence>
<reference key="1">
    <citation type="journal article" date="2001" name="Nature">
        <title>Complete genome sequence of Salmonella enterica serovar Typhimurium LT2.</title>
        <authorList>
            <person name="McClelland M."/>
            <person name="Sanderson K.E."/>
            <person name="Spieth J."/>
            <person name="Clifton S.W."/>
            <person name="Latreille P."/>
            <person name="Courtney L."/>
            <person name="Porwollik S."/>
            <person name="Ali J."/>
            <person name="Dante M."/>
            <person name="Du F."/>
            <person name="Hou S."/>
            <person name="Layman D."/>
            <person name="Leonard S."/>
            <person name="Nguyen C."/>
            <person name="Scott K."/>
            <person name="Holmes A."/>
            <person name="Grewal N."/>
            <person name="Mulvaney E."/>
            <person name="Ryan E."/>
            <person name="Sun H."/>
            <person name="Florea L."/>
            <person name="Miller W."/>
            <person name="Stoneking T."/>
            <person name="Nhan M."/>
            <person name="Waterston R."/>
            <person name="Wilson R.K."/>
        </authorList>
    </citation>
    <scope>NUCLEOTIDE SEQUENCE [LARGE SCALE GENOMIC DNA]</scope>
    <source>
        <strain>LT2 / SGSC1412 / ATCC 700720</strain>
    </source>
</reference>
<reference key="2">
    <citation type="journal article" date="2012" name="Mol. Microbiol.">
        <title>The missing link in coenzyme A biosynthesis: PanM (formerly YhhK), a yeast GCN5 acetyltransferase homologue triggers aspartate decarboxylase (PanD) maturation in Salmonella enterica.</title>
        <authorList>
            <person name="Stuecker T.N."/>
            <person name="Hodge K.M."/>
            <person name="Escalante-Semerena J.C."/>
        </authorList>
    </citation>
    <scope>ACTIVITY REGULATION</scope>
    <scope>INTERACTION WITH PANM</scope>
    <source>
        <strain>LT2</strain>
    </source>
</reference>
<reference key="3">
    <citation type="journal article" date="2012" name="MBio">
        <title>PanM, an acetyl-coenzyme A sensor required for maturation of L-aspartate decarboxylase (PanD).</title>
        <authorList>
            <person name="Stuecker T.N."/>
            <person name="Tucker A.C."/>
            <person name="Escalante-Semerena J.C."/>
        </authorList>
    </citation>
    <scope>ACTIVITY REGULATION</scope>
    <scope>INTERACTION WITH PANM</scope>
    <source>
        <strain>LT2</strain>
    </source>
</reference>
<evidence type="ECO:0000255" key="1">
    <source>
        <dbReference type="HAMAP-Rule" id="MF_00446"/>
    </source>
</evidence>
<evidence type="ECO:0000269" key="2">
    <source>
    </source>
</evidence>
<evidence type="ECO:0000269" key="3">
    <source>
    </source>
</evidence>
<name>PAND_SALTY</name>
<keyword id="KW-0068">Autocatalytic cleavage</keyword>
<keyword id="KW-0963">Cytoplasm</keyword>
<keyword id="KW-0210">Decarboxylase</keyword>
<keyword id="KW-0456">Lyase</keyword>
<keyword id="KW-0566">Pantothenate biosynthesis</keyword>
<keyword id="KW-0670">Pyruvate</keyword>
<keyword id="KW-1185">Reference proteome</keyword>
<keyword id="KW-0704">Schiff base</keyword>
<keyword id="KW-0865">Zymogen</keyword>
<dbReference type="EC" id="4.1.1.11" evidence="1"/>
<dbReference type="EMBL" id="AE006468">
    <property type="protein sequence ID" value="AAL19144.1"/>
    <property type="molecule type" value="Genomic_DNA"/>
</dbReference>
<dbReference type="RefSeq" id="NP_459185.1">
    <property type="nucleotide sequence ID" value="NC_003197.2"/>
</dbReference>
<dbReference type="RefSeq" id="WP_000621526.1">
    <property type="nucleotide sequence ID" value="NC_003197.2"/>
</dbReference>
<dbReference type="SMR" id="P65662"/>
<dbReference type="STRING" id="99287.STM0180"/>
<dbReference type="PaxDb" id="99287-STM0180"/>
<dbReference type="GeneID" id="1251698"/>
<dbReference type="GeneID" id="89550440"/>
<dbReference type="KEGG" id="stm:STM0180"/>
<dbReference type="PATRIC" id="fig|99287.12.peg.190"/>
<dbReference type="HOGENOM" id="CLU_115305_2_1_6"/>
<dbReference type="OMA" id="MLYSKIH"/>
<dbReference type="PhylomeDB" id="P65662"/>
<dbReference type="BioCyc" id="SENT99287:STM0180-MONOMER"/>
<dbReference type="BRENDA" id="4.1.1.11">
    <property type="organism ID" value="5542"/>
</dbReference>
<dbReference type="UniPathway" id="UPA00028">
    <property type="reaction ID" value="UER00002"/>
</dbReference>
<dbReference type="Proteomes" id="UP000001014">
    <property type="component" value="Chromosome"/>
</dbReference>
<dbReference type="GO" id="GO:0005829">
    <property type="term" value="C:cytosol"/>
    <property type="evidence" value="ECO:0000318"/>
    <property type="project" value="GO_Central"/>
</dbReference>
<dbReference type="GO" id="GO:0004068">
    <property type="term" value="F:aspartate 1-decarboxylase activity"/>
    <property type="evidence" value="ECO:0000318"/>
    <property type="project" value="GO_Central"/>
</dbReference>
<dbReference type="GO" id="GO:0006523">
    <property type="term" value="P:alanine biosynthetic process"/>
    <property type="evidence" value="ECO:0000318"/>
    <property type="project" value="GO_Central"/>
</dbReference>
<dbReference type="GO" id="GO:0015940">
    <property type="term" value="P:pantothenate biosynthetic process"/>
    <property type="evidence" value="ECO:0000318"/>
    <property type="project" value="GO_Central"/>
</dbReference>
<dbReference type="CDD" id="cd06919">
    <property type="entry name" value="Asp_decarbox"/>
    <property type="match status" value="1"/>
</dbReference>
<dbReference type="FunFam" id="2.40.40.20:FF:000004">
    <property type="entry name" value="Aspartate 1-decarboxylase"/>
    <property type="match status" value="1"/>
</dbReference>
<dbReference type="Gene3D" id="2.40.40.20">
    <property type="match status" value="1"/>
</dbReference>
<dbReference type="HAMAP" id="MF_00446">
    <property type="entry name" value="PanD"/>
    <property type="match status" value="1"/>
</dbReference>
<dbReference type="InterPro" id="IPR009010">
    <property type="entry name" value="Asp_de-COase-like_dom_sf"/>
</dbReference>
<dbReference type="InterPro" id="IPR003190">
    <property type="entry name" value="Asp_decarbox"/>
</dbReference>
<dbReference type="NCBIfam" id="TIGR00223">
    <property type="entry name" value="panD"/>
    <property type="match status" value="1"/>
</dbReference>
<dbReference type="PANTHER" id="PTHR21012">
    <property type="entry name" value="ASPARTATE 1-DECARBOXYLASE"/>
    <property type="match status" value="1"/>
</dbReference>
<dbReference type="PANTHER" id="PTHR21012:SF0">
    <property type="entry name" value="ASPARTATE 1-DECARBOXYLASE"/>
    <property type="match status" value="1"/>
</dbReference>
<dbReference type="Pfam" id="PF02261">
    <property type="entry name" value="Asp_decarbox"/>
    <property type="match status" value="1"/>
</dbReference>
<dbReference type="PIRSF" id="PIRSF006246">
    <property type="entry name" value="Asp_decarbox"/>
    <property type="match status" value="1"/>
</dbReference>
<dbReference type="SUPFAM" id="SSF50692">
    <property type="entry name" value="ADC-like"/>
    <property type="match status" value="1"/>
</dbReference>
<accession>P65662</accession>
<accession>Q8XGI4</accession>
<proteinExistence type="evidence at protein level"/>
<gene>
    <name evidence="1" type="primary">panD</name>
    <name type="ordered locus">STM0180</name>
</gene>
<feature type="chain" id="PRO_0000023153" description="Aspartate 1-decarboxylase beta chain" evidence="1">
    <location>
        <begin position="1"/>
        <end position="24"/>
    </location>
</feature>
<feature type="chain" id="PRO_0000023154" description="Aspartate 1-decarboxylase alpha chain" evidence="1">
    <location>
        <begin position="25"/>
        <end position="126"/>
    </location>
</feature>
<feature type="active site" description="Schiff-base intermediate with substrate; via pyruvic acid" evidence="1">
    <location>
        <position position="25"/>
    </location>
</feature>
<feature type="active site" description="Proton donor" evidence="1">
    <location>
        <position position="58"/>
    </location>
</feature>
<feature type="binding site" evidence="1">
    <location>
        <position position="57"/>
    </location>
    <ligand>
        <name>substrate</name>
    </ligand>
</feature>
<feature type="binding site" evidence="1">
    <location>
        <begin position="73"/>
        <end position="75"/>
    </location>
    <ligand>
        <name>substrate</name>
    </ligand>
</feature>
<feature type="modified residue" description="Pyruvic acid (Ser)" evidence="1">
    <location>
        <position position="25"/>
    </location>
</feature>
<protein>
    <recommendedName>
        <fullName evidence="1">Aspartate 1-decarboxylase</fullName>
        <ecNumber evidence="1">4.1.1.11</ecNumber>
    </recommendedName>
    <alternativeName>
        <fullName evidence="1">Aspartate alpha-decarboxylase</fullName>
    </alternativeName>
    <component>
        <recommendedName>
            <fullName evidence="1">Aspartate 1-decarboxylase beta chain</fullName>
        </recommendedName>
    </component>
    <component>
        <recommendedName>
            <fullName evidence="1">Aspartate 1-decarboxylase alpha chain</fullName>
        </recommendedName>
    </component>
</protein>